<sequence length="152" mass="15985">MNKPVTLLLATLLAPLSGQLCAQESVTMDGKQYSTIEVNGQTYLIPDNGSKKRVARSLDSKVPQQTLRRGDVLMQGAASPELTVSGTLLVEADDASAKALATRHGLNFKQSSGGIALLEAKPGTDLNAIATKLKSEGVNVQIELSGAEQQPK</sequence>
<feature type="signal peptide" evidence="2">
    <location>
        <begin position="1"/>
        <end position="22"/>
    </location>
</feature>
<feature type="chain" id="PRO_5004862306" description="ASP external chaperone">
    <location>
        <begin position="23"/>
        <end position="152"/>
    </location>
</feature>
<feature type="strand" evidence="8">
    <location>
        <begin position="35"/>
        <end position="38"/>
    </location>
</feature>
<feature type="strand" evidence="8">
    <location>
        <begin position="41"/>
        <end position="44"/>
    </location>
</feature>
<feature type="strand" evidence="8">
    <location>
        <begin position="72"/>
        <end position="74"/>
    </location>
</feature>
<feature type="strand" evidence="8">
    <location>
        <begin position="76"/>
        <end position="79"/>
    </location>
</feature>
<feature type="strand" evidence="8">
    <location>
        <begin position="82"/>
        <end position="92"/>
    </location>
</feature>
<feature type="helix" evidence="8">
    <location>
        <begin position="94"/>
        <end position="102"/>
    </location>
</feature>
<feature type="turn" evidence="8">
    <location>
        <begin position="103"/>
        <end position="105"/>
    </location>
</feature>
<feature type="strand" evidence="8">
    <location>
        <begin position="106"/>
        <end position="112"/>
    </location>
</feature>
<feature type="strand" evidence="8">
    <location>
        <begin position="115"/>
        <end position="120"/>
    </location>
</feature>
<feature type="helix" evidence="8">
    <location>
        <begin position="126"/>
        <end position="135"/>
    </location>
</feature>
<feature type="strand" evidence="8">
    <location>
        <begin position="140"/>
        <end position="147"/>
    </location>
</feature>
<feature type="strand" evidence="8">
    <location>
        <begin position="149"/>
        <end position="151"/>
    </location>
</feature>
<evidence type="ECO:0000269" key="1">
    <source>
    </source>
</evidence>
<evidence type="ECO:0000269" key="2">
    <source>
    </source>
</evidence>
<evidence type="ECO:0000269" key="3">
    <source>
    </source>
</evidence>
<evidence type="ECO:0000303" key="4">
    <source>
    </source>
</evidence>
<evidence type="ECO:0000305" key="5"/>
<evidence type="ECO:0007744" key="6">
    <source>
        <dbReference type="PDB" id="2MK4"/>
    </source>
</evidence>
<evidence type="ECO:0007744" key="7">
    <source>
        <dbReference type="PDB" id="3WQB"/>
    </source>
</evidence>
<evidence type="ECO:0007829" key="8">
    <source>
        <dbReference type="PDB" id="3WQB"/>
    </source>
</evidence>
<reference key="1">
    <citation type="journal article" date="2000" name="Microbiol. Immunol.">
        <title>Production of serine protease of Aeromonas sobria is controlled by the protein encoded by the gene lying adjacent to the 3' end of the protease gene.</title>
        <authorList>
            <person name="Okamoto K."/>
            <person name="Nomura T."/>
            <person name="Hamada M."/>
            <person name="Fukuda T."/>
            <person name="Noguchi Y."/>
            <person name="Fujii Y."/>
        </authorList>
    </citation>
    <scope>NUCLEOTIDE SEQUENCE [GENOMIC DNA]</scope>
    <scope>FUNCTION</scope>
    <scope>SUBCELLULAR LOCATION</scope>
    <source>
        <strain>288</strain>
    </source>
</reference>
<reference key="2">
    <citation type="journal article" date="2002" name="J. Bacteriol.">
        <title>The protein encoded at the 3' end of the serine protease gene of Aeromonas sobria functions as a chaperone in the production of the protease.</title>
        <authorList>
            <person name="Nomura T."/>
            <person name="Fujii Y."/>
            <person name="Yamanaka H."/>
            <person name="Kobayashi H."/>
            <person name="Okamoto K."/>
        </authorList>
    </citation>
    <scope>PROTEIN SEQUENCE OF N-TERMINUS</scope>
    <scope>FUNCTION</scope>
    <scope>INTERACTION WITH ASP</scope>
    <scope>SUBCELLULAR LOCATION</scope>
</reference>
<reference evidence="6 7" key="3">
    <citation type="journal article" date="2015" name="J. Biol. Chem.">
        <title>Structural basis for action of the external chaperone for a propeptide-deficient serine protease from Aeromonas sobria.</title>
        <authorList>
            <person name="Kobayashi H."/>
            <person name="Yoshida T."/>
            <person name="Miyakawa T."/>
            <person name="Tashiro M."/>
            <person name="Okamoto K."/>
            <person name="Yamanaka H."/>
            <person name="Tanokura M."/>
            <person name="Tsuge H."/>
        </authorList>
    </citation>
    <scope>X-RAY CRYSTALLOGRAPHY (1.41 ANGSTROMS) OF 23-152 IN COMPLEX WITH SERINE PROTEASE ASP</scope>
    <scope>STRUCTURE BY NMR OF 23-152</scope>
    <scope>FUNCTION</scope>
    <scope>ACTIVITY REGULATION</scope>
    <scope>INTERACTION WITH ASP</scope>
    <scope>SUBCELLULAR LOCATION</scope>
    <scope>DOMAIN</scope>
</reference>
<proteinExistence type="evidence at protein level"/>
<keyword id="KW-0002">3D-structure</keyword>
<keyword id="KW-0143">Chaperone</keyword>
<keyword id="KW-0903">Direct protein sequencing</keyword>
<keyword id="KW-0574">Periplasm</keyword>
<keyword id="KW-0964">Secreted</keyword>
<keyword id="KW-0732">Signal</keyword>
<name>ASPCH_AERSO</name>
<organism>
    <name type="scientific">Aeromonas sobria</name>
    <dbReference type="NCBI Taxonomy" id="646"/>
    <lineage>
        <taxon>Bacteria</taxon>
        <taxon>Pseudomonadati</taxon>
        <taxon>Pseudomonadota</taxon>
        <taxon>Gammaproteobacteria</taxon>
        <taxon>Aeromonadales</taxon>
        <taxon>Aeromonadaceae</taxon>
        <taxon>Aeromonas</taxon>
    </lineage>
</organism>
<protein>
    <recommendedName>
        <fullName evidence="5">ASP external chaperone</fullName>
    </recommendedName>
    <alternativeName>
        <fullName evidence="4">ORF2</fullName>
    </alternativeName>
</protein>
<accession>W5JXD7</accession>
<comment type="function">
    <text evidence="1 2 3">Required for the production of the active form of the Aeromonas extracellular serine protease (ASP) (PubMed:11092244, PubMed:12446656, PubMed:25784551). Acts as a chaperone that helps ASP form an active structure in the periplasm (PubMed:12446656, PubMed:25784551). Formation of a complex with ASP in the periplasm also inactivates the protease activity and likely protects ASP from intrinsic proteases (PubMed:25784551). Dissociation of the ASP-ORF2 complex after secretion in the extracellular space generates an active ASP (PubMed:25784551).</text>
</comment>
<comment type="activity regulation">
    <text evidence="3">Degraded by ASP after secretion and dissociation of the ASP-ORF2 complex.</text>
</comment>
<comment type="subunit">
    <text evidence="2 3">Forms a complex with the serine protease ASP in the periplasm (PubMed:12446656, PubMed:25784551). After translocation of the ASP-ORF2 complex from the periplasm to the extracellular space, the complex is dissociated in a pH-dependent manner (PubMed:25784551).</text>
</comment>
<comment type="subcellular location">
    <subcellularLocation>
        <location evidence="1 2 3">Periplasm</location>
    </subcellularLocation>
    <subcellularLocation>
        <location evidence="3">Secreted</location>
    </subcellularLocation>
    <text evidence="3">Is active in the periplasm (PubMed:25784551). Translocated from the periplasm to the extracellular space as a complex with ASP (PubMed:25784551).</text>
</comment>
<comment type="domain">
    <text evidence="3">Contains an N-terminal extension, a central body region and a C-terminal tail (PubMed:25784551). The C-terminal tail, which inhibits the protease active site, and the N-terminal extension are both critical for binding and folding of ASP (PubMed:25784551).</text>
</comment>
<dbReference type="EMBL" id="AF253471">
    <property type="protein sequence ID" value="AHH32619.1"/>
    <property type="molecule type" value="Genomic_DNA"/>
</dbReference>
<dbReference type="PDB" id="2MK4">
    <property type="method" value="NMR"/>
    <property type="chains" value="A=22-152"/>
</dbReference>
<dbReference type="PDB" id="3WQB">
    <property type="method" value="X-ray"/>
    <property type="resolution" value="1.41 A"/>
    <property type="chains" value="B=22-152"/>
</dbReference>
<dbReference type="PDBsum" id="2MK4"/>
<dbReference type="PDBsum" id="3WQB"/>
<dbReference type="SMR" id="W5JXD7"/>
<dbReference type="EvolutionaryTrace" id="W5JXD7"/>
<dbReference type="GO" id="GO:0005576">
    <property type="term" value="C:extracellular region"/>
    <property type="evidence" value="ECO:0007669"/>
    <property type="project" value="UniProtKB-SubCell"/>
</dbReference>
<dbReference type="GO" id="GO:0042597">
    <property type="term" value="C:periplasmic space"/>
    <property type="evidence" value="ECO:0007669"/>
    <property type="project" value="UniProtKB-SubCell"/>
</dbReference>
<dbReference type="InterPro" id="IPR040536">
    <property type="entry name" value="ASPCH"/>
</dbReference>
<dbReference type="Pfam" id="PF18492">
    <property type="entry name" value="ORF_2_N"/>
    <property type="match status" value="1"/>
</dbReference>